<gene>
    <name type="primary">mtmr10-a</name>
</gene>
<dbReference type="EMBL" id="BC084803">
    <property type="protein sequence ID" value="AAH84803.1"/>
    <property type="molecule type" value="mRNA"/>
</dbReference>
<dbReference type="RefSeq" id="NP_001088476.1">
    <property type="nucleotide sequence ID" value="NM_001095007.1"/>
</dbReference>
<dbReference type="SMR" id="Q5U581"/>
<dbReference type="DNASU" id="495341"/>
<dbReference type="GeneID" id="495341"/>
<dbReference type="KEGG" id="xla:495341"/>
<dbReference type="AGR" id="Xenbase:XB-GENE-1002521"/>
<dbReference type="CTD" id="495341"/>
<dbReference type="Xenbase" id="XB-GENE-1002521">
    <property type="gene designation" value="mtmr10.S"/>
</dbReference>
<dbReference type="OrthoDB" id="271628at2759"/>
<dbReference type="Proteomes" id="UP000186698">
    <property type="component" value="Chromosome 3S"/>
</dbReference>
<dbReference type="Bgee" id="495341">
    <property type="expression patterns" value="Expressed in kidney and 19 other cell types or tissues"/>
</dbReference>
<dbReference type="GO" id="GO:0005737">
    <property type="term" value="C:cytoplasm"/>
    <property type="evidence" value="ECO:0000318"/>
    <property type="project" value="GO_Central"/>
</dbReference>
<dbReference type="GO" id="GO:0016020">
    <property type="term" value="C:membrane"/>
    <property type="evidence" value="ECO:0000318"/>
    <property type="project" value="GO_Central"/>
</dbReference>
<dbReference type="GO" id="GO:0004438">
    <property type="term" value="F:phosphatidylinositol-3-phosphate phosphatase activity"/>
    <property type="evidence" value="ECO:0000318"/>
    <property type="project" value="GO_Central"/>
</dbReference>
<dbReference type="GO" id="GO:0046856">
    <property type="term" value="P:phosphatidylinositol dephosphorylation"/>
    <property type="evidence" value="ECO:0000318"/>
    <property type="project" value="GO_Central"/>
</dbReference>
<dbReference type="CDD" id="cd13346">
    <property type="entry name" value="PH-GRAM_MTMR10"/>
    <property type="match status" value="1"/>
</dbReference>
<dbReference type="CDD" id="cd14593">
    <property type="entry name" value="PTP-MTMR10"/>
    <property type="match status" value="1"/>
</dbReference>
<dbReference type="Gene3D" id="2.30.29.30">
    <property type="entry name" value="Pleckstrin-homology domain (PH domain)/Phosphotyrosine-binding domain (PTB)"/>
    <property type="match status" value="1"/>
</dbReference>
<dbReference type="InterPro" id="IPR036004">
    <property type="entry name" value="MTMR10_PH-GRAM"/>
</dbReference>
<dbReference type="InterPro" id="IPR030573">
    <property type="entry name" value="MTMR10_PTP"/>
</dbReference>
<dbReference type="InterPro" id="IPR022587">
    <property type="entry name" value="MTMR12-like_C"/>
</dbReference>
<dbReference type="InterPro" id="IPR030564">
    <property type="entry name" value="Myotubularin"/>
</dbReference>
<dbReference type="InterPro" id="IPR010569">
    <property type="entry name" value="Myotubularin-like_Pase_dom"/>
</dbReference>
<dbReference type="InterPro" id="IPR011993">
    <property type="entry name" value="PH-like_dom_sf"/>
</dbReference>
<dbReference type="InterPro" id="IPR029021">
    <property type="entry name" value="Prot-tyrosine_phosphatase-like"/>
</dbReference>
<dbReference type="PANTHER" id="PTHR10807">
    <property type="entry name" value="MYOTUBULARIN-RELATED"/>
    <property type="match status" value="1"/>
</dbReference>
<dbReference type="PANTHER" id="PTHR10807:SF39">
    <property type="entry name" value="MYOTUBULARIN-RELATED PROTEIN 10"/>
    <property type="match status" value="1"/>
</dbReference>
<dbReference type="Pfam" id="PF12578">
    <property type="entry name" value="3-PAP"/>
    <property type="match status" value="1"/>
</dbReference>
<dbReference type="Pfam" id="PF06602">
    <property type="entry name" value="Myotub-related"/>
    <property type="match status" value="2"/>
</dbReference>
<dbReference type="SUPFAM" id="SSF52799">
    <property type="entry name" value="(Phosphotyrosine protein) phosphatases II"/>
    <property type="match status" value="1"/>
</dbReference>
<dbReference type="SUPFAM" id="SSF50729">
    <property type="entry name" value="PH domain-like"/>
    <property type="match status" value="1"/>
</dbReference>
<dbReference type="PROSITE" id="PS51339">
    <property type="entry name" value="PPASE_MYOTUBULARIN"/>
    <property type="match status" value="1"/>
</dbReference>
<evidence type="ECO:0000255" key="1">
    <source>
        <dbReference type="PROSITE-ProRule" id="PRU00669"/>
    </source>
</evidence>
<evidence type="ECO:0000305" key="2"/>
<name>MTRAA_XENLA</name>
<sequence>MFSLKQPKPSFRSYLLPPQQEDKLNPETKIKKLKAVLLPGEIVVNEVNFVRKCIASDTSQYDLWGKLICTNFKISFITENSVPFQRFHYKNLLLGEHDVPLTCIEQIVVVNDTKRKQKILSHNQKLKFNPTELIIYCKDFRILRFRFDEAGPESAKKVCLALAHYSQPTDLQLLFAFEYVAQMYHKPEYKVNGIDPGGGGDFCQRTPLFETYSDWDREIKRTGASDWRVCSVNEGYMISTCLPEYFVVPSSLADQDLKQYSHAFVGRRMPLWCWNHSNGSALVRMASIKDLLQQRKIGQRVCSGITRSHPLRSDVYKCDLDHNVPSIQDIQAAFSKLRQLCVNEPFDETEEKWLSSLENAQWLEFVRTFLKQAAELAYVLDFSRRSVVLQEEEGRDVSCLVASLVQLMLDPYFRTIVGFQSLIQKEWVMSAYPFLDRCNHLKRSEKESPLFVLFLDCVWQLLQQYPAAFQFTETYLTVLHDSTRISLFGTFLFNSPHQRVQQSTEFAIARNIQLGEEKGLKFPSVWDWSLQFSAKDRALFNNPLYIGKSVPCVQNGAVKSFKRTKNYSSTMRGMPPSVKNGMAIQQDFMPRRNSLILKLKPEILQQVPVIIPSSGFEQYLRDWFTKPADLHGVILPCLHGTHIKLWKLCYLRWTPEAQINHGGFITAFHKISLLASEIELLQSRLRQYRAYPLSTVTSPVGEQNRMFFRPDELHSSNGSLDILTSSFPFSPIGNLCRRSILGTPLSKFINGAKIWLSTETLANED</sequence>
<reference key="1">
    <citation type="submission" date="2004-10" db="EMBL/GenBank/DDBJ databases">
        <authorList>
            <consortium name="NIH - Xenopus Gene Collection (XGC) project"/>
        </authorList>
    </citation>
    <scope>NUCLEOTIDE SEQUENCE [LARGE SCALE MRNA]</scope>
    <source>
        <tissue>Eye</tissue>
    </source>
</reference>
<accession>Q5U581</accession>
<keyword id="KW-1185">Reference proteome</keyword>
<feature type="chain" id="PRO_0000284363" description="Myotubularin-related protein 10-A">
    <location>
        <begin position="1"/>
        <end position="765"/>
    </location>
</feature>
<feature type="domain" description="Myotubularin phosphatase" evidence="1">
    <location>
        <begin position="209"/>
        <end position="650"/>
    </location>
</feature>
<proteinExistence type="evidence at transcript level"/>
<organism>
    <name type="scientific">Xenopus laevis</name>
    <name type="common">African clawed frog</name>
    <dbReference type="NCBI Taxonomy" id="8355"/>
    <lineage>
        <taxon>Eukaryota</taxon>
        <taxon>Metazoa</taxon>
        <taxon>Chordata</taxon>
        <taxon>Craniata</taxon>
        <taxon>Vertebrata</taxon>
        <taxon>Euteleostomi</taxon>
        <taxon>Amphibia</taxon>
        <taxon>Batrachia</taxon>
        <taxon>Anura</taxon>
        <taxon>Pipoidea</taxon>
        <taxon>Pipidae</taxon>
        <taxon>Xenopodinae</taxon>
        <taxon>Xenopus</taxon>
        <taxon>Xenopus</taxon>
    </lineage>
</organism>
<comment type="similarity">
    <text evidence="2">Belongs to the protein-tyrosine phosphatase family. Non-receptor class myotubularin subfamily.</text>
</comment>
<comment type="caution">
    <text evidence="2">Although it belongs to the non-receptor class myotubularin subfamily, lacks the conserved active site cysteine residue at position 391 in the dsPTPase catalytic loop, suggesting that it has no phosphatase activity.</text>
</comment>
<protein>
    <recommendedName>
        <fullName>Myotubularin-related protein 10-A</fullName>
    </recommendedName>
    <alternativeName>
        <fullName evidence="2">Inactive phosphatidylinositol 3-phosphatase 10-A</fullName>
    </alternativeName>
</protein>